<accession>A9GHR3</accession>
<organism>
    <name type="scientific">Sorangium cellulosum (strain So ce56)</name>
    <name type="common">Polyangium cellulosum (strain So ce56)</name>
    <dbReference type="NCBI Taxonomy" id="448385"/>
    <lineage>
        <taxon>Bacteria</taxon>
        <taxon>Pseudomonadati</taxon>
        <taxon>Myxococcota</taxon>
        <taxon>Polyangia</taxon>
        <taxon>Polyangiales</taxon>
        <taxon>Polyangiaceae</taxon>
        <taxon>Sorangium</taxon>
    </lineage>
</organism>
<sequence>MPSLKSIRKRISSVKSTQKITRAMKMVAGAKLNKAQLRITELRPYAVKVQEVLSAITRDAAPAAEALAAEGIGAEGEAGAPAGGEKALHPLLVTRPERRVLLVVLTSDRGLCGAFNTNINKRAEREWKSRTEAGQEVQLAIIGRKGRDYFNRRGAPILEYLAGVWDKLNLETAQAVGAKLLAPFNKGEIDAIYLVYNEFKSAITQTVVVERLLPPAGGPAKEQEQGDEGGHGAPSAASEFLYEPDKGALLERLVPMYVDISILRALYESMASELGAKLTAMDAANKNAKEVIDNLTLEYNKARQAAITKELMEIIGGSEALKE</sequence>
<proteinExistence type="inferred from homology"/>
<protein>
    <recommendedName>
        <fullName evidence="1">ATP synthase gamma chain</fullName>
    </recommendedName>
    <alternativeName>
        <fullName evidence="1">ATP synthase F1 sector gamma subunit</fullName>
    </alternativeName>
    <alternativeName>
        <fullName evidence="1">F-ATPase gamma subunit</fullName>
    </alternativeName>
</protein>
<reference key="1">
    <citation type="journal article" date="2007" name="Nat. Biotechnol.">
        <title>Complete genome sequence of the myxobacterium Sorangium cellulosum.</title>
        <authorList>
            <person name="Schneiker S."/>
            <person name="Perlova O."/>
            <person name="Kaiser O."/>
            <person name="Gerth K."/>
            <person name="Alici A."/>
            <person name="Altmeyer M.O."/>
            <person name="Bartels D."/>
            <person name="Bekel T."/>
            <person name="Beyer S."/>
            <person name="Bode E."/>
            <person name="Bode H.B."/>
            <person name="Bolten C.J."/>
            <person name="Choudhuri J.V."/>
            <person name="Doss S."/>
            <person name="Elnakady Y.A."/>
            <person name="Frank B."/>
            <person name="Gaigalat L."/>
            <person name="Goesmann A."/>
            <person name="Groeger C."/>
            <person name="Gross F."/>
            <person name="Jelsbak L."/>
            <person name="Jelsbak L."/>
            <person name="Kalinowski J."/>
            <person name="Kegler C."/>
            <person name="Knauber T."/>
            <person name="Konietzny S."/>
            <person name="Kopp M."/>
            <person name="Krause L."/>
            <person name="Krug D."/>
            <person name="Linke B."/>
            <person name="Mahmud T."/>
            <person name="Martinez-Arias R."/>
            <person name="McHardy A.C."/>
            <person name="Merai M."/>
            <person name="Meyer F."/>
            <person name="Mormann S."/>
            <person name="Munoz-Dorado J."/>
            <person name="Perez J."/>
            <person name="Pradella S."/>
            <person name="Rachid S."/>
            <person name="Raddatz G."/>
            <person name="Rosenau F."/>
            <person name="Rueckert C."/>
            <person name="Sasse F."/>
            <person name="Scharfe M."/>
            <person name="Schuster S.C."/>
            <person name="Suen G."/>
            <person name="Treuner-Lange A."/>
            <person name="Velicer G.J."/>
            <person name="Vorholter F.-J."/>
            <person name="Weissman K.J."/>
            <person name="Welch R.D."/>
            <person name="Wenzel S.C."/>
            <person name="Whitworth D.E."/>
            <person name="Wilhelm S."/>
            <person name="Wittmann C."/>
            <person name="Bloecker H."/>
            <person name="Puehler A."/>
            <person name="Mueller R."/>
        </authorList>
    </citation>
    <scope>NUCLEOTIDE SEQUENCE [LARGE SCALE GENOMIC DNA]</scope>
    <source>
        <strain>So ce56</strain>
    </source>
</reference>
<dbReference type="EMBL" id="AM746676">
    <property type="protein sequence ID" value="CAN99533.1"/>
    <property type="molecule type" value="Genomic_DNA"/>
</dbReference>
<dbReference type="RefSeq" id="WP_012241968.1">
    <property type="nucleotide sequence ID" value="NC_010162.1"/>
</dbReference>
<dbReference type="SMR" id="A9GHR3"/>
<dbReference type="STRING" id="448385.sce9360"/>
<dbReference type="KEGG" id="scl:sce9360"/>
<dbReference type="eggNOG" id="COG0224">
    <property type="taxonomic scope" value="Bacteria"/>
</dbReference>
<dbReference type="HOGENOM" id="CLU_050669_0_1_7"/>
<dbReference type="OrthoDB" id="9812769at2"/>
<dbReference type="BioCyc" id="SCEL448385:SCE_RS47860-MONOMER"/>
<dbReference type="Proteomes" id="UP000002139">
    <property type="component" value="Chromosome"/>
</dbReference>
<dbReference type="GO" id="GO:0005886">
    <property type="term" value="C:plasma membrane"/>
    <property type="evidence" value="ECO:0007669"/>
    <property type="project" value="UniProtKB-SubCell"/>
</dbReference>
<dbReference type="GO" id="GO:0045259">
    <property type="term" value="C:proton-transporting ATP synthase complex"/>
    <property type="evidence" value="ECO:0007669"/>
    <property type="project" value="UniProtKB-KW"/>
</dbReference>
<dbReference type="GO" id="GO:0005524">
    <property type="term" value="F:ATP binding"/>
    <property type="evidence" value="ECO:0007669"/>
    <property type="project" value="UniProtKB-UniRule"/>
</dbReference>
<dbReference type="GO" id="GO:0046933">
    <property type="term" value="F:proton-transporting ATP synthase activity, rotational mechanism"/>
    <property type="evidence" value="ECO:0007669"/>
    <property type="project" value="UniProtKB-UniRule"/>
</dbReference>
<dbReference type="GO" id="GO:0042777">
    <property type="term" value="P:proton motive force-driven plasma membrane ATP synthesis"/>
    <property type="evidence" value="ECO:0007669"/>
    <property type="project" value="UniProtKB-UniRule"/>
</dbReference>
<dbReference type="CDD" id="cd12151">
    <property type="entry name" value="F1-ATPase_gamma"/>
    <property type="match status" value="1"/>
</dbReference>
<dbReference type="FunFam" id="3.40.1380.10:FF:000006">
    <property type="entry name" value="ATP synthase gamma chain"/>
    <property type="match status" value="1"/>
</dbReference>
<dbReference type="Gene3D" id="3.40.1380.10">
    <property type="match status" value="1"/>
</dbReference>
<dbReference type="Gene3D" id="1.10.287.80">
    <property type="entry name" value="ATP synthase, gamma subunit, helix hairpin domain"/>
    <property type="match status" value="2"/>
</dbReference>
<dbReference type="HAMAP" id="MF_00815">
    <property type="entry name" value="ATP_synth_gamma_bact"/>
    <property type="match status" value="1"/>
</dbReference>
<dbReference type="InterPro" id="IPR035968">
    <property type="entry name" value="ATP_synth_F1_ATPase_gsu"/>
</dbReference>
<dbReference type="InterPro" id="IPR000131">
    <property type="entry name" value="ATP_synth_F1_gsu"/>
</dbReference>
<dbReference type="NCBIfam" id="TIGR01146">
    <property type="entry name" value="ATPsyn_F1gamma"/>
    <property type="match status" value="1"/>
</dbReference>
<dbReference type="PANTHER" id="PTHR11693">
    <property type="entry name" value="ATP SYNTHASE GAMMA CHAIN"/>
    <property type="match status" value="1"/>
</dbReference>
<dbReference type="PANTHER" id="PTHR11693:SF22">
    <property type="entry name" value="ATP SYNTHASE SUBUNIT GAMMA, MITOCHONDRIAL"/>
    <property type="match status" value="1"/>
</dbReference>
<dbReference type="Pfam" id="PF00231">
    <property type="entry name" value="ATP-synt"/>
    <property type="match status" value="1"/>
</dbReference>
<dbReference type="PRINTS" id="PR00126">
    <property type="entry name" value="ATPASEGAMMA"/>
</dbReference>
<dbReference type="SUPFAM" id="SSF52943">
    <property type="entry name" value="ATP synthase (F1-ATPase), gamma subunit"/>
    <property type="match status" value="1"/>
</dbReference>
<gene>
    <name evidence="1" type="primary">atpG</name>
    <name type="ordered locus">sce9360</name>
</gene>
<keyword id="KW-0066">ATP synthesis</keyword>
<keyword id="KW-0997">Cell inner membrane</keyword>
<keyword id="KW-1003">Cell membrane</keyword>
<keyword id="KW-0139">CF(1)</keyword>
<keyword id="KW-0375">Hydrogen ion transport</keyword>
<keyword id="KW-0406">Ion transport</keyword>
<keyword id="KW-0472">Membrane</keyword>
<keyword id="KW-1185">Reference proteome</keyword>
<keyword id="KW-0813">Transport</keyword>
<feature type="chain" id="PRO_1000083812" description="ATP synthase gamma chain">
    <location>
        <begin position="1"/>
        <end position="323"/>
    </location>
</feature>
<feature type="region of interest" description="Disordered" evidence="2">
    <location>
        <begin position="215"/>
        <end position="237"/>
    </location>
</feature>
<feature type="compositionally biased region" description="Basic and acidic residues" evidence="2">
    <location>
        <begin position="221"/>
        <end position="230"/>
    </location>
</feature>
<evidence type="ECO:0000255" key="1">
    <source>
        <dbReference type="HAMAP-Rule" id="MF_00815"/>
    </source>
</evidence>
<evidence type="ECO:0000256" key="2">
    <source>
        <dbReference type="SAM" id="MobiDB-lite"/>
    </source>
</evidence>
<comment type="function">
    <text evidence="1">Produces ATP from ADP in the presence of a proton gradient across the membrane. The gamma chain is believed to be important in regulating ATPase activity and the flow of protons through the CF(0) complex.</text>
</comment>
<comment type="subunit">
    <text evidence="1">F-type ATPases have 2 components, CF(1) - the catalytic core - and CF(0) - the membrane proton channel. CF(1) has five subunits: alpha(3), beta(3), gamma(1), delta(1), epsilon(1). CF(0) has three main subunits: a, b and c.</text>
</comment>
<comment type="subcellular location">
    <subcellularLocation>
        <location evidence="1">Cell inner membrane</location>
        <topology evidence="1">Peripheral membrane protein</topology>
    </subcellularLocation>
</comment>
<comment type="similarity">
    <text evidence="1">Belongs to the ATPase gamma chain family.</text>
</comment>
<name>ATPG_SORC5</name>